<accession>Q5X1M8</accession>
<comment type="function">
    <text evidence="1">Catalyzes the reversible reaction in which hydroxymethyl group from 5,10-methylenetetrahydrofolate is transferred onto alpha-ketoisovalerate to form ketopantoate.</text>
</comment>
<comment type="catalytic activity">
    <reaction evidence="1">
        <text>3-methyl-2-oxobutanoate + (6R)-5,10-methylene-5,6,7,8-tetrahydrofolate + H2O = 2-dehydropantoate + (6S)-5,6,7,8-tetrahydrofolate</text>
        <dbReference type="Rhea" id="RHEA:11824"/>
        <dbReference type="ChEBI" id="CHEBI:11561"/>
        <dbReference type="ChEBI" id="CHEBI:11851"/>
        <dbReference type="ChEBI" id="CHEBI:15377"/>
        <dbReference type="ChEBI" id="CHEBI:15636"/>
        <dbReference type="ChEBI" id="CHEBI:57453"/>
        <dbReference type="EC" id="2.1.2.11"/>
    </reaction>
</comment>
<comment type="cofactor">
    <cofactor evidence="1">
        <name>Mg(2+)</name>
        <dbReference type="ChEBI" id="CHEBI:18420"/>
    </cofactor>
    <text evidence="1">Binds 1 Mg(2+) ion per subunit.</text>
</comment>
<comment type="pathway">
    <text evidence="1">Cofactor biosynthesis; (R)-pantothenate biosynthesis; (R)-pantoate from 3-methyl-2-oxobutanoate: step 1/2.</text>
</comment>
<comment type="subunit">
    <text evidence="1">Homodecamer; pentamer of dimers.</text>
</comment>
<comment type="subcellular location">
    <subcellularLocation>
        <location evidence="1">Cytoplasm</location>
    </subcellularLocation>
</comment>
<comment type="similarity">
    <text evidence="1">Belongs to the PanB family.</text>
</comment>
<proteinExistence type="inferred from homology"/>
<organism>
    <name type="scientific">Legionella pneumophila (strain Paris)</name>
    <dbReference type="NCBI Taxonomy" id="297246"/>
    <lineage>
        <taxon>Bacteria</taxon>
        <taxon>Pseudomonadati</taxon>
        <taxon>Pseudomonadota</taxon>
        <taxon>Gammaproteobacteria</taxon>
        <taxon>Legionellales</taxon>
        <taxon>Legionellaceae</taxon>
        <taxon>Legionella</taxon>
    </lineage>
</organism>
<protein>
    <recommendedName>
        <fullName evidence="1">3-methyl-2-oxobutanoate hydroxymethyltransferase</fullName>
        <ecNumber evidence="1">2.1.2.11</ecNumber>
    </recommendedName>
    <alternativeName>
        <fullName evidence="1">Ketopantoate hydroxymethyltransferase</fullName>
        <shortName evidence="1">KPHMT</shortName>
    </alternativeName>
</protein>
<evidence type="ECO:0000255" key="1">
    <source>
        <dbReference type="HAMAP-Rule" id="MF_00156"/>
    </source>
</evidence>
<reference key="1">
    <citation type="journal article" date="2004" name="Nat. Genet.">
        <title>Evidence in the Legionella pneumophila genome for exploitation of host cell functions and high genome plasticity.</title>
        <authorList>
            <person name="Cazalet C."/>
            <person name="Rusniok C."/>
            <person name="Brueggemann H."/>
            <person name="Zidane N."/>
            <person name="Magnier A."/>
            <person name="Ma L."/>
            <person name="Tichit M."/>
            <person name="Jarraud S."/>
            <person name="Bouchier C."/>
            <person name="Vandenesch F."/>
            <person name="Kunst F."/>
            <person name="Etienne J."/>
            <person name="Glaser P."/>
            <person name="Buchrieser C."/>
        </authorList>
    </citation>
    <scope>NUCLEOTIDE SEQUENCE [LARGE SCALE GENOMIC DNA]</scope>
    <source>
        <strain>Paris</strain>
    </source>
</reference>
<dbReference type="EC" id="2.1.2.11" evidence="1"/>
<dbReference type="EMBL" id="CR628336">
    <property type="protein sequence ID" value="CAH13868.1"/>
    <property type="molecule type" value="Genomic_DNA"/>
</dbReference>
<dbReference type="RefSeq" id="WP_015961738.1">
    <property type="nucleotide sequence ID" value="NC_006368.1"/>
</dbReference>
<dbReference type="SMR" id="Q5X1M8"/>
<dbReference type="KEGG" id="lpp:lpp2715"/>
<dbReference type="LegioList" id="lpp2715"/>
<dbReference type="HOGENOM" id="CLU_036645_1_0_6"/>
<dbReference type="UniPathway" id="UPA00028">
    <property type="reaction ID" value="UER00003"/>
</dbReference>
<dbReference type="GO" id="GO:0005737">
    <property type="term" value="C:cytoplasm"/>
    <property type="evidence" value="ECO:0007669"/>
    <property type="project" value="UniProtKB-SubCell"/>
</dbReference>
<dbReference type="GO" id="GO:0003864">
    <property type="term" value="F:3-methyl-2-oxobutanoate hydroxymethyltransferase activity"/>
    <property type="evidence" value="ECO:0007669"/>
    <property type="project" value="UniProtKB-UniRule"/>
</dbReference>
<dbReference type="GO" id="GO:0000287">
    <property type="term" value="F:magnesium ion binding"/>
    <property type="evidence" value="ECO:0007669"/>
    <property type="project" value="TreeGrafter"/>
</dbReference>
<dbReference type="GO" id="GO:0015940">
    <property type="term" value="P:pantothenate biosynthetic process"/>
    <property type="evidence" value="ECO:0007669"/>
    <property type="project" value="UniProtKB-UniRule"/>
</dbReference>
<dbReference type="CDD" id="cd06557">
    <property type="entry name" value="KPHMT-like"/>
    <property type="match status" value="1"/>
</dbReference>
<dbReference type="FunFam" id="3.20.20.60:FF:000003">
    <property type="entry name" value="3-methyl-2-oxobutanoate hydroxymethyltransferase"/>
    <property type="match status" value="1"/>
</dbReference>
<dbReference type="Gene3D" id="3.20.20.60">
    <property type="entry name" value="Phosphoenolpyruvate-binding domains"/>
    <property type="match status" value="1"/>
</dbReference>
<dbReference type="HAMAP" id="MF_00156">
    <property type="entry name" value="PanB"/>
    <property type="match status" value="1"/>
</dbReference>
<dbReference type="InterPro" id="IPR003700">
    <property type="entry name" value="Pantoate_hydroxy_MeTrfase"/>
</dbReference>
<dbReference type="InterPro" id="IPR015813">
    <property type="entry name" value="Pyrv/PenolPyrv_kinase-like_dom"/>
</dbReference>
<dbReference type="InterPro" id="IPR040442">
    <property type="entry name" value="Pyrv_kinase-like_dom_sf"/>
</dbReference>
<dbReference type="NCBIfam" id="TIGR00222">
    <property type="entry name" value="panB"/>
    <property type="match status" value="1"/>
</dbReference>
<dbReference type="NCBIfam" id="NF001452">
    <property type="entry name" value="PRK00311.1"/>
    <property type="match status" value="1"/>
</dbReference>
<dbReference type="PANTHER" id="PTHR20881">
    <property type="entry name" value="3-METHYL-2-OXOBUTANOATE HYDROXYMETHYLTRANSFERASE"/>
    <property type="match status" value="1"/>
</dbReference>
<dbReference type="PANTHER" id="PTHR20881:SF0">
    <property type="entry name" value="3-METHYL-2-OXOBUTANOATE HYDROXYMETHYLTRANSFERASE"/>
    <property type="match status" value="1"/>
</dbReference>
<dbReference type="Pfam" id="PF02548">
    <property type="entry name" value="Pantoate_transf"/>
    <property type="match status" value="1"/>
</dbReference>
<dbReference type="PIRSF" id="PIRSF000388">
    <property type="entry name" value="Pantoate_hydroxy_MeTrfase"/>
    <property type="match status" value="1"/>
</dbReference>
<dbReference type="SUPFAM" id="SSF51621">
    <property type="entry name" value="Phosphoenolpyruvate/pyruvate domain"/>
    <property type="match status" value="1"/>
</dbReference>
<gene>
    <name evidence="1" type="primary">panB</name>
    <name type="ordered locus">lpp2715</name>
</gene>
<keyword id="KW-0963">Cytoplasm</keyword>
<keyword id="KW-0460">Magnesium</keyword>
<keyword id="KW-0479">Metal-binding</keyword>
<keyword id="KW-0566">Pantothenate biosynthesis</keyword>
<keyword id="KW-0808">Transferase</keyword>
<feature type="chain" id="PRO_0000297286" description="3-methyl-2-oxobutanoate hydroxymethyltransferase">
    <location>
        <begin position="1"/>
        <end position="262"/>
    </location>
</feature>
<feature type="active site" description="Proton acceptor" evidence="1">
    <location>
        <position position="180"/>
    </location>
</feature>
<feature type="binding site" evidence="1">
    <location>
        <begin position="42"/>
        <end position="43"/>
    </location>
    <ligand>
        <name>3-methyl-2-oxobutanoate</name>
        <dbReference type="ChEBI" id="CHEBI:11851"/>
    </ligand>
</feature>
<feature type="binding site" evidence="1">
    <location>
        <position position="42"/>
    </location>
    <ligand>
        <name>Mg(2+)</name>
        <dbReference type="ChEBI" id="CHEBI:18420"/>
    </ligand>
</feature>
<feature type="binding site" evidence="1">
    <location>
        <position position="81"/>
    </location>
    <ligand>
        <name>3-methyl-2-oxobutanoate</name>
        <dbReference type="ChEBI" id="CHEBI:11851"/>
    </ligand>
</feature>
<feature type="binding site" evidence="1">
    <location>
        <position position="81"/>
    </location>
    <ligand>
        <name>Mg(2+)</name>
        <dbReference type="ChEBI" id="CHEBI:18420"/>
    </ligand>
</feature>
<feature type="binding site" evidence="1">
    <location>
        <position position="110"/>
    </location>
    <ligand>
        <name>3-methyl-2-oxobutanoate</name>
        <dbReference type="ChEBI" id="CHEBI:11851"/>
    </ligand>
</feature>
<feature type="binding site" evidence="1">
    <location>
        <position position="112"/>
    </location>
    <ligand>
        <name>Mg(2+)</name>
        <dbReference type="ChEBI" id="CHEBI:18420"/>
    </ligand>
</feature>
<name>PANB_LEGPA</name>
<sequence length="262" mass="28608">MKIHDFKMKKQEQKKISMLTCYDYPSACIVAESNIDCVLVGDSVAMAVHGHPTTIMATIEMMELHTQAVARGLGKQFLITDLPFLGHKSSQGHTVENVKRLLQAGAQAVKIEGADKDTCQTISHLVNAGIPVMGHIGLTPQSIHQLGGYKVQGKNSEQAETLLQQAATLEQAGCFAVVIECVPQDLAKTITDSLVIPTIGIGAGPGTDGQVLVWHDMLGLQTSFNPKFVKKYFRAKDHFIEALNSYVQQVQQMHFPANEHSF</sequence>